<accession>P42963</accession>
<sequence>MFQIDLNCDLGESFGAYKIGLDQDILEYVTSANIACGFHAGDPSVMRKTVALAAERGVKMGAHPGLPDLLGFGRRNMAISPEEAYDLVVYQIGALSGFLKAEGLHMQHVKPHGALYNMAAVDQKLSDAIAKAVYKVDPGLILFGLAESELVKAGERIGLQTANEVFADRTYQSDGTLTPRSQPDALIESDDAAVTQVIKMVKEGAVKSQQGHDVSLKADTVCIHGDGAHALTFAQKIRKQLKAAGIEVTAISEQRST</sequence>
<comment type="function">
    <text evidence="1 2">Catalyzes the cleavage of 5-oxoproline to form L-glutamate coupled to the hydrolysis of ATP to ADP and inorganic phosphate.</text>
</comment>
<comment type="catalytic activity">
    <reaction evidence="1 2">
        <text>5-oxo-L-proline + ATP + 2 H2O = L-glutamate + ADP + phosphate + H(+)</text>
        <dbReference type="Rhea" id="RHEA:10348"/>
        <dbReference type="ChEBI" id="CHEBI:15377"/>
        <dbReference type="ChEBI" id="CHEBI:15378"/>
        <dbReference type="ChEBI" id="CHEBI:29985"/>
        <dbReference type="ChEBI" id="CHEBI:30616"/>
        <dbReference type="ChEBI" id="CHEBI:43474"/>
        <dbReference type="ChEBI" id="CHEBI:58402"/>
        <dbReference type="ChEBI" id="CHEBI:456216"/>
        <dbReference type="EC" id="3.5.2.9"/>
    </reaction>
</comment>
<comment type="subunit">
    <text evidence="1 2">Forms a complex composed of PxpA, PxpB and PxpC.</text>
</comment>
<comment type="disruption phenotype">
    <text evidence="2">Deletion mutant grows less well than wild type on minimal medium with ammonium as nitrogen source and cannot grow on 5-oxoproline. Mutant lacks 5-oxoprolinase activity and accumulates 5-oxo-L-proline.</text>
</comment>
<comment type="similarity">
    <text evidence="1 4">Belongs to the LamB/PxpA family.</text>
</comment>
<comment type="sequence caution" evidence="4">
    <conflict type="frameshift">
        <sequence resource="EMBL-CDS" id="BAA07357"/>
    </conflict>
</comment>
<comment type="sequence caution" evidence="4">
    <conflict type="frameshift">
        <sequence resource="EMBL-CDS" id="BAA09036"/>
    </conflict>
</comment>
<organism>
    <name type="scientific">Bacillus subtilis (strain 168)</name>
    <dbReference type="NCBI Taxonomy" id="224308"/>
    <lineage>
        <taxon>Bacteria</taxon>
        <taxon>Bacillati</taxon>
        <taxon>Bacillota</taxon>
        <taxon>Bacilli</taxon>
        <taxon>Bacillales</taxon>
        <taxon>Bacillaceae</taxon>
        <taxon>Bacillus</taxon>
    </lineage>
</organism>
<reference key="1">
    <citation type="journal article" date="1996" name="Microbiology">
        <title>The 25 degrees-36 degrees region of the Bacillus subtilis chromosome: determination of the sequence of a 146 kb segment and identification of 113 genes.</title>
        <authorList>
            <person name="Yamane K."/>
            <person name="Kumano M."/>
            <person name="Kurita K."/>
        </authorList>
    </citation>
    <scope>NUCLEOTIDE SEQUENCE [GENOMIC DNA]</scope>
    <source>
        <strain>168</strain>
    </source>
</reference>
<reference key="2">
    <citation type="journal article" date="1997" name="Nature">
        <title>The complete genome sequence of the Gram-positive bacterium Bacillus subtilis.</title>
        <authorList>
            <person name="Kunst F."/>
            <person name="Ogasawara N."/>
            <person name="Moszer I."/>
            <person name="Albertini A.M."/>
            <person name="Alloni G."/>
            <person name="Azevedo V."/>
            <person name="Bertero M.G."/>
            <person name="Bessieres P."/>
            <person name="Bolotin A."/>
            <person name="Borchert S."/>
            <person name="Borriss R."/>
            <person name="Boursier L."/>
            <person name="Brans A."/>
            <person name="Braun M."/>
            <person name="Brignell S.C."/>
            <person name="Bron S."/>
            <person name="Brouillet S."/>
            <person name="Bruschi C.V."/>
            <person name="Caldwell B."/>
            <person name="Capuano V."/>
            <person name="Carter N.M."/>
            <person name="Choi S.-K."/>
            <person name="Codani J.-J."/>
            <person name="Connerton I.F."/>
            <person name="Cummings N.J."/>
            <person name="Daniel R.A."/>
            <person name="Denizot F."/>
            <person name="Devine K.M."/>
            <person name="Duesterhoeft A."/>
            <person name="Ehrlich S.D."/>
            <person name="Emmerson P.T."/>
            <person name="Entian K.-D."/>
            <person name="Errington J."/>
            <person name="Fabret C."/>
            <person name="Ferrari E."/>
            <person name="Foulger D."/>
            <person name="Fritz C."/>
            <person name="Fujita M."/>
            <person name="Fujita Y."/>
            <person name="Fuma S."/>
            <person name="Galizzi A."/>
            <person name="Galleron N."/>
            <person name="Ghim S.-Y."/>
            <person name="Glaser P."/>
            <person name="Goffeau A."/>
            <person name="Golightly E.J."/>
            <person name="Grandi G."/>
            <person name="Guiseppi G."/>
            <person name="Guy B.J."/>
            <person name="Haga K."/>
            <person name="Haiech J."/>
            <person name="Harwood C.R."/>
            <person name="Henaut A."/>
            <person name="Hilbert H."/>
            <person name="Holsappel S."/>
            <person name="Hosono S."/>
            <person name="Hullo M.-F."/>
            <person name="Itaya M."/>
            <person name="Jones L.-M."/>
            <person name="Joris B."/>
            <person name="Karamata D."/>
            <person name="Kasahara Y."/>
            <person name="Klaerr-Blanchard M."/>
            <person name="Klein C."/>
            <person name="Kobayashi Y."/>
            <person name="Koetter P."/>
            <person name="Koningstein G."/>
            <person name="Krogh S."/>
            <person name="Kumano M."/>
            <person name="Kurita K."/>
            <person name="Lapidus A."/>
            <person name="Lardinois S."/>
            <person name="Lauber J."/>
            <person name="Lazarevic V."/>
            <person name="Lee S.-M."/>
            <person name="Levine A."/>
            <person name="Liu H."/>
            <person name="Masuda S."/>
            <person name="Mauel C."/>
            <person name="Medigue C."/>
            <person name="Medina N."/>
            <person name="Mellado R.P."/>
            <person name="Mizuno M."/>
            <person name="Moestl D."/>
            <person name="Nakai S."/>
            <person name="Noback M."/>
            <person name="Noone D."/>
            <person name="O'Reilly M."/>
            <person name="Ogawa K."/>
            <person name="Ogiwara A."/>
            <person name="Oudega B."/>
            <person name="Park S.-H."/>
            <person name="Parro V."/>
            <person name="Pohl T.M."/>
            <person name="Portetelle D."/>
            <person name="Porwollik S."/>
            <person name="Prescott A.M."/>
            <person name="Presecan E."/>
            <person name="Pujic P."/>
            <person name="Purnelle B."/>
            <person name="Rapoport G."/>
            <person name="Rey M."/>
            <person name="Reynolds S."/>
            <person name="Rieger M."/>
            <person name="Rivolta C."/>
            <person name="Rocha E."/>
            <person name="Roche B."/>
            <person name="Rose M."/>
            <person name="Sadaie Y."/>
            <person name="Sato T."/>
            <person name="Scanlan E."/>
            <person name="Schleich S."/>
            <person name="Schroeter R."/>
            <person name="Scoffone F."/>
            <person name="Sekiguchi J."/>
            <person name="Sekowska A."/>
            <person name="Seror S.J."/>
            <person name="Serror P."/>
            <person name="Shin B.-S."/>
            <person name="Soldo B."/>
            <person name="Sorokin A."/>
            <person name="Tacconi E."/>
            <person name="Takagi T."/>
            <person name="Takahashi H."/>
            <person name="Takemaru K."/>
            <person name="Takeuchi M."/>
            <person name="Tamakoshi A."/>
            <person name="Tanaka T."/>
            <person name="Terpstra P."/>
            <person name="Tognoni A."/>
            <person name="Tosato V."/>
            <person name="Uchiyama S."/>
            <person name="Vandenbol M."/>
            <person name="Vannier F."/>
            <person name="Vassarotti A."/>
            <person name="Viari A."/>
            <person name="Wambutt R."/>
            <person name="Wedler E."/>
            <person name="Wedler H."/>
            <person name="Weitzenegger T."/>
            <person name="Winters P."/>
            <person name="Wipat A."/>
            <person name="Yamamoto H."/>
            <person name="Yamane K."/>
            <person name="Yasumoto K."/>
            <person name="Yata K."/>
            <person name="Yoshida K."/>
            <person name="Yoshikawa H.-F."/>
            <person name="Zumstein E."/>
            <person name="Yoshikawa H."/>
            <person name="Danchin A."/>
        </authorList>
    </citation>
    <scope>NUCLEOTIDE SEQUENCE [LARGE SCALE GENOMIC DNA]</scope>
    <source>
        <strain>168</strain>
    </source>
</reference>
<reference key="3">
    <citation type="journal article" date="1999" name="Genome Res.">
        <title>Detecting and analyzing DNA sequencing errors: toward a higher quality of the Bacillus subtilis genome sequence.</title>
        <authorList>
            <person name="Medigue C."/>
            <person name="Rose M."/>
            <person name="Viari A."/>
            <person name="Danchin A."/>
        </authorList>
    </citation>
    <scope>SEQUENCE REVISION</scope>
</reference>
<reference key="4">
    <citation type="journal article" date="2009" name="Microbiology">
        <title>From a consortium sequence to a unified sequence: the Bacillus subtilis 168 reference genome a decade later.</title>
        <authorList>
            <person name="Barbe V."/>
            <person name="Cruveiller S."/>
            <person name="Kunst F."/>
            <person name="Lenoble P."/>
            <person name="Meurice G."/>
            <person name="Sekowska A."/>
            <person name="Vallenet D."/>
            <person name="Wang T."/>
            <person name="Moszer I."/>
            <person name="Medigue C."/>
            <person name="Danchin A."/>
        </authorList>
    </citation>
    <scope>SEQUENCE REVISION TO 208 AND 219-224</scope>
</reference>
<reference key="5">
    <citation type="journal article" date="1995" name="Microbiology">
        <title>Determination of a 17,484 bp nucleotide sequence around the 39 degrees region of the Bacillus subtilis chromosome and similarity analysis of the products of putative ORFs.</title>
        <authorList>
            <person name="Akagawa E."/>
            <person name="Kurita K."/>
            <person name="Sugawara T."/>
            <person name="Nakamura K."/>
            <person name="Kasahara Y."/>
            <person name="Ogasawara N."/>
            <person name="Yamane K."/>
        </authorList>
    </citation>
    <scope>NUCLEOTIDE SEQUENCE [GENOMIC DNA] OF 46-257</scope>
    <source>
        <strain>168</strain>
    </source>
</reference>
<reference key="6">
    <citation type="journal article" date="2017" name="J. Biol. Chem.">
        <title>Discovery of a widespread prokaryotic 5-oxoprolinase that was hiding in plain sight.</title>
        <authorList>
            <person name="Niehaus T.D."/>
            <person name="Elbadawi-Sidhu M."/>
            <person name="de Crecy-Lagard V."/>
            <person name="Fiehn O."/>
            <person name="Hanson A.D."/>
        </authorList>
    </citation>
    <scope>FUNCTION</scope>
    <scope>CATALYTIC ACTIVITY</scope>
    <scope>SUBUNIT</scope>
    <scope>DISRUPTION PHENOTYPE</scope>
</reference>
<proteinExistence type="evidence at protein level"/>
<protein>
    <recommendedName>
        <fullName evidence="1 4">5-oxoprolinase subunit A</fullName>
        <shortName evidence="1 4">5-OPase subunit A</shortName>
        <ecNumber evidence="1 2">3.5.2.9</ecNumber>
    </recommendedName>
    <alternativeName>
        <fullName evidence="1 4">5-oxoprolinase (ATP-hydrolyzing) subunit A</fullName>
    </alternativeName>
</protein>
<gene>
    <name evidence="1 3" type="primary">pxpA</name>
    <name type="synonym">ycsF</name>
    <name type="ordered locus">BSU04050</name>
</gene>
<evidence type="ECO:0000255" key="1">
    <source>
        <dbReference type="HAMAP-Rule" id="MF_00691"/>
    </source>
</evidence>
<evidence type="ECO:0000269" key="2">
    <source>
    </source>
</evidence>
<evidence type="ECO:0000303" key="3">
    <source>
    </source>
</evidence>
<evidence type="ECO:0000305" key="4"/>
<name>PXPA_BACSU</name>
<dbReference type="EC" id="3.5.2.9" evidence="1 2"/>
<dbReference type="EMBL" id="D50453">
    <property type="protein sequence ID" value="BAA09036.1"/>
    <property type="status" value="ALT_FRAME"/>
    <property type="molecule type" value="Genomic_DNA"/>
</dbReference>
<dbReference type="EMBL" id="AL009126">
    <property type="protein sequence ID" value="CAB12213.3"/>
    <property type="molecule type" value="Genomic_DNA"/>
</dbReference>
<dbReference type="EMBL" id="D38161">
    <property type="protein sequence ID" value="BAA07357.1"/>
    <property type="status" value="ALT_FRAME"/>
    <property type="molecule type" value="Genomic_DNA"/>
</dbReference>
<dbReference type="PIR" id="D69765">
    <property type="entry name" value="D69765"/>
</dbReference>
<dbReference type="RefSeq" id="NP_388287.3">
    <property type="nucleotide sequence ID" value="NC_000964.3"/>
</dbReference>
<dbReference type="RefSeq" id="WP_003234423.1">
    <property type="nucleotide sequence ID" value="NZ_OZ025638.1"/>
</dbReference>
<dbReference type="SMR" id="P42963"/>
<dbReference type="FunCoup" id="P42963">
    <property type="interactions" value="37"/>
</dbReference>
<dbReference type="STRING" id="224308.BSU04050"/>
<dbReference type="PaxDb" id="224308-BSU04050"/>
<dbReference type="EnsemblBacteria" id="CAB12213">
    <property type="protein sequence ID" value="CAB12213"/>
    <property type="gene ID" value="BSU_04050"/>
</dbReference>
<dbReference type="GeneID" id="938259"/>
<dbReference type="KEGG" id="bsu:BSU04050"/>
<dbReference type="PATRIC" id="fig|224308.179.peg.431"/>
<dbReference type="eggNOG" id="COG1540">
    <property type="taxonomic scope" value="Bacteria"/>
</dbReference>
<dbReference type="InParanoid" id="P42963"/>
<dbReference type="OrthoDB" id="9773478at2"/>
<dbReference type="PhylomeDB" id="P42963"/>
<dbReference type="BioCyc" id="BSUB:BSU04050-MONOMER"/>
<dbReference type="BRENDA" id="3.5.2.9">
    <property type="organism ID" value="658"/>
</dbReference>
<dbReference type="Proteomes" id="UP000001570">
    <property type="component" value="Chromosome"/>
</dbReference>
<dbReference type="GO" id="GO:0017168">
    <property type="term" value="F:5-oxoprolinase (ATP-hydrolyzing) activity"/>
    <property type="evidence" value="ECO:0007669"/>
    <property type="project" value="UniProtKB-UniRule"/>
</dbReference>
<dbReference type="GO" id="GO:0005524">
    <property type="term" value="F:ATP binding"/>
    <property type="evidence" value="ECO:0007669"/>
    <property type="project" value="UniProtKB-UniRule"/>
</dbReference>
<dbReference type="GO" id="GO:0005975">
    <property type="term" value="P:carbohydrate metabolic process"/>
    <property type="evidence" value="ECO:0007669"/>
    <property type="project" value="InterPro"/>
</dbReference>
<dbReference type="CDD" id="cd10787">
    <property type="entry name" value="LamB_YcsF_like"/>
    <property type="match status" value="1"/>
</dbReference>
<dbReference type="Gene3D" id="3.20.20.370">
    <property type="entry name" value="Glycoside hydrolase/deacetylase"/>
    <property type="match status" value="1"/>
</dbReference>
<dbReference type="HAMAP" id="MF_00691">
    <property type="entry name" value="PxpA"/>
    <property type="match status" value="1"/>
</dbReference>
<dbReference type="InterPro" id="IPR011330">
    <property type="entry name" value="Glyco_hydro/deAcase_b/a-brl"/>
</dbReference>
<dbReference type="InterPro" id="IPR005501">
    <property type="entry name" value="LamB/YcsF/PxpA-like"/>
</dbReference>
<dbReference type="NCBIfam" id="NF003814">
    <property type="entry name" value="PRK05406.1-3"/>
    <property type="match status" value="1"/>
</dbReference>
<dbReference type="NCBIfam" id="NF003816">
    <property type="entry name" value="PRK05406.1-5"/>
    <property type="match status" value="1"/>
</dbReference>
<dbReference type="PANTHER" id="PTHR30292:SF0">
    <property type="entry name" value="5-OXOPROLINASE SUBUNIT A"/>
    <property type="match status" value="1"/>
</dbReference>
<dbReference type="PANTHER" id="PTHR30292">
    <property type="entry name" value="UNCHARACTERIZED PROTEIN YBGL-RELATED"/>
    <property type="match status" value="1"/>
</dbReference>
<dbReference type="Pfam" id="PF03746">
    <property type="entry name" value="LamB_YcsF"/>
    <property type="match status" value="1"/>
</dbReference>
<dbReference type="SUPFAM" id="SSF88713">
    <property type="entry name" value="Glycoside hydrolase/deacetylase"/>
    <property type="match status" value="1"/>
</dbReference>
<keyword id="KW-0067">ATP-binding</keyword>
<keyword id="KW-0378">Hydrolase</keyword>
<keyword id="KW-0547">Nucleotide-binding</keyword>
<keyword id="KW-1185">Reference proteome</keyword>
<feature type="chain" id="PRO_0000184990" description="5-oxoprolinase subunit A">
    <location>
        <begin position="1"/>
        <end position="257"/>
    </location>
</feature>
<feature type="sequence conflict" description="In Ref. 1; BAA09036 and 5; BAA07357." evidence="4" ref="1 5">
    <original>S</original>
    <variation>F</variation>
    <location>
        <position position="208"/>
    </location>
</feature>
<feature type="sequence conflict" description="In Ref. 1; BAA09036 and 5; BAA07357." evidence="4" ref="1 5">
    <original>DTVCIH</original>
    <variation>GSVFIY</variation>
    <location>
        <begin position="219"/>
        <end position="224"/>
    </location>
</feature>